<name>MURA2_STRPN</name>
<organism>
    <name type="scientific">Streptococcus pneumoniae serotype 4 (strain ATCC BAA-334 / TIGR4)</name>
    <dbReference type="NCBI Taxonomy" id="170187"/>
    <lineage>
        <taxon>Bacteria</taxon>
        <taxon>Bacillati</taxon>
        <taxon>Bacillota</taxon>
        <taxon>Bacilli</taxon>
        <taxon>Lactobacillales</taxon>
        <taxon>Streptococcaceae</taxon>
        <taxon>Streptococcus</taxon>
    </lineage>
</organism>
<comment type="function">
    <text evidence="1">Cell wall formation. Adds enolpyruvyl to UDP-N-acetylglucosamine.</text>
</comment>
<comment type="catalytic activity">
    <reaction evidence="1">
        <text>phosphoenolpyruvate + UDP-N-acetyl-alpha-D-glucosamine = UDP-N-acetyl-3-O-(1-carboxyvinyl)-alpha-D-glucosamine + phosphate</text>
        <dbReference type="Rhea" id="RHEA:18681"/>
        <dbReference type="ChEBI" id="CHEBI:43474"/>
        <dbReference type="ChEBI" id="CHEBI:57705"/>
        <dbReference type="ChEBI" id="CHEBI:58702"/>
        <dbReference type="ChEBI" id="CHEBI:68483"/>
        <dbReference type="EC" id="2.5.1.7"/>
    </reaction>
</comment>
<comment type="pathway">
    <text evidence="1">Cell wall biogenesis; peptidoglycan biosynthesis.</text>
</comment>
<comment type="subcellular location">
    <subcellularLocation>
        <location evidence="1">Cytoplasm</location>
    </subcellularLocation>
</comment>
<comment type="similarity">
    <text evidence="1">Belongs to the EPSP synthase family. MurA subfamily.</text>
</comment>
<reference key="1">
    <citation type="journal article" date="2001" name="Science">
        <title>Complete genome sequence of a virulent isolate of Streptococcus pneumoniae.</title>
        <authorList>
            <person name="Tettelin H."/>
            <person name="Nelson K.E."/>
            <person name="Paulsen I.T."/>
            <person name="Eisen J.A."/>
            <person name="Read T.D."/>
            <person name="Peterson S.N."/>
            <person name="Heidelberg J.F."/>
            <person name="DeBoy R.T."/>
            <person name="Haft D.H."/>
            <person name="Dodson R.J."/>
            <person name="Durkin A.S."/>
            <person name="Gwinn M.L."/>
            <person name="Kolonay J.F."/>
            <person name="Nelson W.C."/>
            <person name="Peterson J.D."/>
            <person name="Umayam L.A."/>
            <person name="White O."/>
            <person name="Salzberg S.L."/>
            <person name="Lewis M.R."/>
            <person name="Radune D."/>
            <person name="Holtzapple E.K."/>
            <person name="Khouri H.M."/>
            <person name="Wolf A.M."/>
            <person name="Utterback T.R."/>
            <person name="Hansen C.L."/>
            <person name="McDonald L.A."/>
            <person name="Feldblyum T.V."/>
            <person name="Angiuoli S.V."/>
            <person name="Dickinson T."/>
            <person name="Hickey E.K."/>
            <person name="Holt I.E."/>
            <person name="Loftus B.J."/>
            <person name="Yang F."/>
            <person name="Smith H.O."/>
            <person name="Venter J.C."/>
            <person name="Dougherty B.A."/>
            <person name="Morrison D.A."/>
            <person name="Hollingshead S.K."/>
            <person name="Fraser C.M."/>
        </authorList>
    </citation>
    <scope>NUCLEOTIDE SEQUENCE [LARGE SCALE GENOMIC DNA]</scope>
    <source>
        <strain>ATCC BAA-334 / TIGR4</strain>
    </source>
</reference>
<keyword id="KW-0131">Cell cycle</keyword>
<keyword id="KW-0132">Cell division</keyword>
<keyword id="KW-0133">Cell shape</keyword>
<keyword id="KW-0961">Cell wall biogenesis/degradation</keyword>
<keyword id="KW-0963">Cytoplasm</keyword>
<keyword id="KW-0573">Peptidoglycan synthesis</keyword>
<keyword id="KW-0670">Pyruvate</keyword>
<keyword id="KW-1185">Reference proteome</keyword>
<keyword id="KW-0808">Transferase</keyword>
<accession>Q97QW6</accession>
<sequence>MRKIVINGGLPLQGEITISGAKNSVVALIPAIILADDVVTLDCVPDISDVASLVEIMELMGATVKRYDDVLEIDPRGVQNIPMPYGKINSLRASYYFYGSLLGRFGEATVGLPGGCDLGPRPIDLHLKAFEAMGATASYEGDNMKLSAKDTGLHGASIYMDTVSVGATINTMIAAVKANGRTIIENAAREPEIIDVATLLNNMGAHIRGAGTNIIIIDGVERLHGTRHQVIPDRIEAGTYISLAAAVGKGIRINNVLYEHLEGFIAKLEEMGVRMTVSEDSIFVEEQSNLKAINIKTAPYPGFATDLQQPLTPLLLRANGRGTIVDTIYEKRVNHVFELAKMDADISTTNGHILYTGGRDLRGASVKATDLRAGAALVIAGLMAEGKTEITNIEFILRGYSDIIEKLRNLGADIRLVED</sequence>
<evidence type="ECO:0000255" key="1">
    <source>
        <dbReference type="HAMAP-Rule" id="MF_00111"/>
    </source>
</evidence>
<gene>
    <name evidence="1" type="primary">murA2</name>
    <name type="synonym">murZ</name>
    <name type="ordered locus">SP_1081</name>
</gene>
<dbReference type="EC" id="2.5.1.7" evidence="1"/>
<dbReference type="EMBL" id="AE005672">
    <property type="protein sequence ID" value="AAK75194.1"/>
    <property type="molecule type" value="Genomic_DNA"/>
</dbReference>
<dbReference type="PIR" id="A95125">
    <property type="entry name" value="A95125"/>
</dbReference>
<dbReference type="RefSeq" id="WP_001227083.1">
    <property type="nucleotide sequence ID" value="NZ_CP155539.1"/>
</dbReference>
<dbReference type="SMR" id="Q97QW6"/>
<dbReference type="PaxDb" id="170187-SP_1081"/>
<dbReference type="EnsemblBacteria" id="AAK75194">
    <property type="protein sequence ID" value="AAK75194"/>
    <property type="gene ID" value="SP_1081"/>
</dbReference>
<dbReference type="KEGG" id="spn:SP_1081"/>
<dbReference type="eggNOG" id="COG0766">
    <property type="taxonomic scope" value="Bacteria"/>
</dbReference>
<dbReference type="PhylomeDB" id="Q97QW6"/>
<dbReference type="BioCyc" id="SPNE170187:G1FZB-1110-MONOMER"/>
<dbReference type="UniPathway" id="UPA00219"/>
<dbReference type="Proteomes" id="UP000000585">
    <property type="component" value="Chromosome"/>
</dbReference>
<dbReference type="GO" id="GO:0005737">
    <property type="term" value="C:cytoplasm"/>
    <property type="evidence" value="ECO:0007669"/>
    <property type="project" value="UniProtKB-SubCell"/>
</dbReference>
<dbReference type="GO" id="GO:0008760">
    <property type="term" value="F:UDP-N-acetylglucosamine 1-carboxyvinyltransferase activity"/>
    <property type="evidence" value="ECO:0007669"/>
    <property type="project" value="UniProtKB-UniRule"/>
</dbReference>
<dbReference type="GO" id="GO:0051301">
    <property type="term" value="P:cell division"/>
    <property type="evidence" value="ECO:0007669"/>
    <property type="project" value="UniProtKB-KW"/>
</dbReference>
<dbReference type="GO" id="GO:0071555">
    <property type="term" value="P:cell wall organization"/>
    <property type="evidence" value="ECO:0007669"/>
    <property type="project" value="UniProtKB-KW"/>
</dbReference>
<dbReference type="GO" id="GO:0009252">
    <property type="term" value="P:peptidoglycan biosynthetic process"/>
    <property type="evidence" value="ECO:0007669"/>
    <property type="project" value="UniProtKB-UniRule"/>
</dbReference>
<dbReference type="GO" id="GO:0008360">
    <property type="term" value="P:regulation of cell shape"/>
    <property type="evidence" value="ECO:0007669"/>
    <property type="project" value="UniProtKB-KW"/>
</dbReference>
<dbReference type="GO" id="GO:0019277">
    <property type="term" value="P:UDP-N-acetylgalactosamine biosynthetic process"/>
    <property type="evidence" value="ECO:0007669"/>
    <property type="project" value="InterPro"/>
</dbReference>
<dbReference type="CDD" id="cd01555">
    <property type="entry name" value="UdpNAET"/>
    <property type="match status" value="1"/>
</dbReference>
<dbReference type="FunFam" id="3.65.10.10:FF:000001">
    <property type="entry name" value="UDP-N-acetylglucosamine 1-carboxyvinyltransferase"/>
    <property type="match status" value="1"/>
</dbReference>
<dbReference type="Gene3D" id="3.65.10.10">
    <property type="entry name" value="Enolpyruvate transferase domain"/>
    <property type="match status" value="2"/>
</dbReference>
<dbReference type="HAMAP" id="MF_00111">
    <property type="entry name" value="MurA"/>
    <property type="match status" value="1"/>
</dbReference>
<dbReference type="InterPro" id="IPR001986">
    <property type="entry name" value="Enolpyruvate_Tfrase_dom"/>
</dbReference>
<dbReference type="InterPro" id="IPR036968">
    <property type="entry name" value="Enolpyruvate_Tfrase_sf"/>
</dbReference>
<dbReference type="InterPro" id="IPR050068">
    <property type="entry name" value="MurA_subfamily"/>
</dbReference>
<dbReference type="InterPro" id="IPR013792">
    <property type="entry name" value="RNA3'P_cycl/enolpyr_Trfase_a/b"/>
</dbReference>
<dbReference type="InterPro" id="IPR005750">
    <property type="entry name" value="UDP_GlcNAc_COvinyl_MurA"/>
</dbReference>
<dbReference type="NCBIfam" id="TIGR01072">
    <property type="entry name" value="murA"/>
    <property type="match status" value="1"/>
</dbReference>
<dbReference type="NCBIfam" id="NF006873">
    <property type="entry name" value="PRK09369.1"/>
    <property type="match status" value="1"/>
</dbReference>
<dbReference type="NCBIfam" id="NF009470">
    <property type="entry name" value="PRK12830.1"/>
    <property type="match status" value="1"/>
</dbReference>
<dbReference type="PANTHER" id="PTHR43783">
    <property type="entry name" value="UDP-N-ACETYLGLUCOSAMINE 1-CARBOXYVINYLTRANSFERASE"/>
    <property type="match status" value="1"/>
</dbReference>
<dbReference type="PANTHER" id="PTHR43783:SF2">
    <property type="entry name" value="UDP-N-ACETYLGLUCOSAMINE 1-CARBOXYVINYLTRANSFERASE 2"/>
    <property type="match status" value="1"/>
</dbReference>
<dbReference type="Pfam" id="PF00275">
    <property type="entry name" value="EPSP_synthase"/>
    <property type="match status" value="1"/>
</dbReference>
<dbReference type="SUPFAM" id="SSF55205">
    <property type="entry name" value="EPT/RTPC-like"/>
    <property type="match status" value="1"/>
</dbReference>
<feature type="chain" id="PRO_0000178931" description="UDP-N-acetylglucosamine 1-carboxyvinyltransferase 2">
    <location>
        <begin position="1"/>
        <end position="419"/>
    </location>
</feature>
<feature type="active site" description="Proton donor" evidence="1">
    <location>
        <position position="116"/>
    </location>
</feature>
<feature type="binding site" evidence="1">
    <location>
        <begin position="22"/>
        <end position="23"/>
    </location>
    <ligand>
        <name>phosphoenolpyruvate</name>
        <dbReference type="ChEBI" id="CHEBI:58702"/>
    </ligand>
</feature>
<feature type="binding site" evidence="1">
    <location>
        <position position="92"/>
    </location>
    <ligand>
        <name>UDP-N-acetyl-alpha-D-glucosamine</name>
        <dbReference type="ChEBI" id="CHEBI:57705"/>
    </ligand>
</feature>
<feature type="binding site" evidence="1">
    <location>
        <begin position="121"/>
        <end position="125"/>
    </location>
    <ligand>
        <name>UDP-N-acetyl-alpha-D-glucosamine</name>
        <dbReference type="ChEBI" id="CHEBI:57705"/>
    </ligand>
</feature>
<feature type="binding site" evidence="1">
    <location>
        <position position="306"/>
    </location>
    <ligand>
        <name>UDP-N-acetyl-alpha-D-glucosamine</name>
        <dbReference type="ChEBI" id="CHEBI:57705"/>
    </ligand>
</feature>
<feature type="binding site" evidence="1">
    <location>
        <position position="328"/>
    </location>
    <ligand>
        <name>UDP-N-acetyl-alpha-D-glucosamine</name>
        <dbReference type="ChEBI" id="CHEBI:57705"/>
    </ligand>
</feature>
<feature type="modified residue" description="2-(S-cysteinyl)pyruvic acid O-phosphothioketal" evidence="1">
    <location>
        <position position="116"/>
    </location>
</feature>
<proteinExistence type="inferred from homology"/>
<protein>
    <recommendedName>
        <fullName evidence="1">UDP-N-acetylglucosamine 1-carboxyvinyltransferase 2</fullName>
        <ecNumber evidence="1">2.5.1.7</ecNumber>
    </recommendedName>
    <alternativeName>
        <fullName evidence="1">Enoylpyruvate transferase 2</fullName>
    </alternativeName>
    <alternativeName>
        <fullName evidence="1">UDP-N-acetylglucosamine enolpyruvyl transferase 2</fullName>
        <shortName evidence="1">EPT 2</shortName>
    </alternativeName>
</protein>